<gene>
    <name type="ordered locus">Cyan7425_3737</name>
</gene>
<name>Y3737_CYAP4</name>
<evidence type="ECO:0000255" key="1">
    <source>
        <dbReference type="HAMAP-Rule" id="MF_01074"/>
    </source>
</evidence>
<keyword id="KW-0533">Nickel</keyword>
<feature type="chain" id="PRO_1000149767" description="Putative nickel insertion protein">
    <location>
        <begin position="1"/>
        <end position="410"/>
    </location>
</feature>
<sequence length="410" mass="44693">MTRIAYLDCPTGISGDMCLGALLDGGVPLDYLQHHLQGLGIAEEFSLSWHKVEHQGQQASKAEVQLRAHGHHHHPPARHWPDIVALIQQAGLPLRAEAWSLAIFRELALAEAAVHGVAAEQVHFHEVGATDALVDIVGTCLGLDWLGIEELYCSALPTGGGTVKAAHGRLPVPVPAVLQLWQKFHVPVYSNGIERELVTPTGAAIAVTLASQFGPPPPLQLEKIGLGAGTQELPLANILRLWIGQKATQAAVPQGQDGSDRVEEIILLETQIDDLNPQAIGYTMEALFAAGAVDVFTQAIGMKKSRPGVLLSVVCTAETVESCETVLFRETTTLGIRRSQQQRRILARQIQTLDTRYGPIRLKIAYQQGKIVNVQPEFEDCAQVAKQQDLPWQQIHQLALSTWYQHQPSP</sequence>
<accession>B8HTH5</accession>
<comment type="similarity">
    <text evidence="1">Belongs to the LarC family.</text>
</comment>
<reference key="1">
    <citation type="journal article" date="2011" name="MBio">
        <title>Novel metabolic attributes of the genus Cyanothece, comprising a group of unicellular nitrogen-fixing Cyanobacteria.</title>
        <authorList>
            <person name="Bandyopadhyay A."/>
            <person name="Elvitigala T."/>
            <person name="Welsh E."/>
            <person name="Stockel J."/>
            <person name="Liberton M."/>
            <person name="Min H."/>
            <person name="Sherman L.A."/>
            <person name="Pakrasi H.B."/>
        </authorList>
    </citation>
    <scope>NUCLEOTIDE SEQUENCE [LARGE SCALE GENOMIC DNA]</scope>
    <source>
        <strain>PCC 7425 / ATCC 29141</strain>
    </source>
</reference>
<dbReference type="EMBL" id="CP001344">
    <property type="protein sequence ID" value="ACL46056.1"/>
    <property type="molecule type" value="Genomic_DNA"/>
</dbReference>
<dbReference type="SMR" id="B8HTH5"/>
<dbReference type="STRING" id="395961.Cyan7425_3737"/>
<dbReference type="KEGG" id="cyn:Cyan7425_3737"/>
<dbReference type="eggNOG" id="COG1641">
    <property type="taxonomic scope" value="Bacteria"/>
</dbReference>
<dbReference type="HOGENOM" id="CLU_028523_2_1_3"/>
<dbReference type="OrthoDB" id="9765625at2"/>
<dbReference type="GO" id="GO:0016829">
    <property type="term" value="F:lyase activity"/>
    <property type="evidence" value="ECO:0007669"/>
    <property type="project" value="UniProtKB-UniRule"/>
</dbReference>
<dbReference type="GO" id="GO:0016151">
    <property type="term" value="F:nickel cation binding"/>
    <property type="evidence" value="ECO:0007669"/>
    <property type="project" value="UniProtKB-UniRule"/>
</dbReference>
<dbReference type="Gene3D" id="3.10.20.300">
    <property type="entry name" value="mk0293 like domain"/>
    <property type="match status" value="1"/>
</dbReference>
<dbReference type="Gene3D" id="3.30.70.1380">
    <property type="entry name" value="Transcriptional regulatory protein pf0864 domain like"/>
    <property type="match status" value="1"/>
</dbReference>
<dbReference type="HAMAP" id="MF_01074">
    <property type="entry name" value="LarC"/>
    <property type="match status" value="1"/>
</dbReference>
<dbReference type="InterPro" id="IPR002822">
    <property type="entry name" value="Ni_insertion"/>
</dbReference>
<dbReference type="NCBIfam" id="TIGR00299">
    <property type="entry name" value="nickel pincer cofactor biosynthesis protein LarC"/>
    <property type="match status" value="1"/>
</dbReference>
<dbReference type="PANTHER" id="PTHR36566">
    <property type="entry name" value="NICKEL INSERTION PROTEIN-RELATED"/>
    <property type="match status" value="1"/>
</dbReference>
<dbReference type="PANTHER" id="PTHR36566:SF1">
    <property type="entry name" value="PYRIDINIUM-3,5-BISTHIOCARBOXYLIC ACID MONONUCLEOTIDE NICKEL INSERTION PROTEIN"/>
    <property type="match status" value="1"/>
</dbReference>
<dbReference type="Pfam" id="PF01969">
    <property type="entry name" value="Ni_insertion"/>
    <property type="match status" value="1"/>
</dbReference>
<proteinExistence type="inferred from homology"/>
<protein>
    <recommendedName>
        <fullName evidence="1">Putative nickel insertion protein</fullName>
    </recommendedName>
</protein>
<organism>
    <name type="scientific">Cyanothece sp. (strain PCC 7425 / ATCC 29141)</name>
    <dbReference type="NCBI Taxonomy" id="395961"/>
    <lineage>
        <taxon>Bacteria</taxon>
        <taxon>Bacillati</taxon>
        <taxon>Cyanobacteriota</taxon>
        <taxon>Cyanophyceae</taxon>
        <taxon>Gomontiellales</taxon>
        <taxon>Cyanothecaceae</taxon>
        <taxon>Cyanothece</taxon>
    </lineage>
</organism>